<proteinExistence type="evidence at protein level"/>
<name>ICE2_YEAST</name>
<protein>
    <recommendedName>
        <fullName>Protein ICE2</fullName>
    </recommendedName>
    <alternativeName>
        <fullName>Inheritance of cortical ER protein 2</fullName>
    </alternativeName>
</protein>
<comment type="subcellular location">
    <subcellularLocation>
        <location evidence="2">Endoplasmic reticulum membrane</location>
        <topology evidence="2">Multi-pass membrane protein</topology>
    </subcellularLocation>
</comment>
<comment type="miscellaneous">
    <text evidence="3">Present with 606 molecules/cell in log phase SD medium.</text>
</comment>
<sequence>MTSLSKSFMQSGRICAACFYLLFTLLSIPISFKVGGLECGLSFTVTLFTLYFITTTLNVLARRHGGRLYIFFTNCLYYSQHFIIASLLYLFLSGFSNDELGNVLKNKYNESESFLEALKNSLNSNQINYVLYYYYYRFVVQPWQFVLTKSTPFFTLSEGFFTILAIQAVGETNRWLSNDLNSNTWIISSLLTSGGVITASLYYLYRIYVTPIWPLSIQTASLLGLVLSMVCGLGLYGIVSQKGSVIESSLFFAYIVRCIYEISPKLATTATDEILNLFKDVWQKHQRNLPTADNLLCYFHNVILKNAEVLWGSFIPRGRKKTGDFHDKLISILSFEKVSLISKPFWKFFKNFTFSVPLSINEFCQVTIKMASESVSPAIVINLCFRVLMFYSATRIIPALQRKNDKQLRKSRRIMKGLYWYSPCILIAMYTHLILQYSGELKKDLCIWGCSEKWFGVDQPEIIVDSWGFWNWCNIFCTILVYATELIGSGS</sequence>
<organism>
    <name type="scientific">Saccharomyces cerevisiae (strain ATCC 204508 / S288c)</name>
    <name type="common">Baker's yeast</name>
    <dbReference type="NCBI Taxonomy" id="559292"/>
    <lineage>
        <taxon>Eukaryota</taxon>
        <taxon>Fungi</taxon>
        <taxon>Dikarya</taxon>
        <taxon>Ascomycota</taxon>
        <taxon>Saccharomycotina</taxon>
        <taxon>Saccharomycetes</taxon>
        <taxon>Saccharomycetales</taxon>
        <taxon>Saccharomycetaceae</taxon>
        <taxon>Saccharomyces</taxon>
    </lineage>
</organism>
<accession>P40499</accession>
<accession>D6VVJ7</accession>
<accession>Q6B2T7</accession>
<evidence type="ECO:0000255" key="1"/>
<evidence type="ECO:0000269" key="2">
    <source>
    </source>
</evidence>
<evidence type="ECO:0000269" key="3">
    <source>
    </source>
</evidence>
<evidence type="ECO:0000305" key="4"/>
<keyword id="KW-0256">Endoplasmic reticulum</keyword>
<keyword id="KW-0472">Membrane</keyword>
<keyword id="KW-1185">Reference proteome</keyword>
<keyword id="KW-0812">Transmembrane</keyword>
<keyword id="KW-1133">Transmembrane helix</keyword>
<dbReference type="EMBL" id="Z46728">
    <property type="protein sequence ID" value="CAA86704.1"/>
    <property type="molecule type" value="Genomic_DNA"/>
</dbReference>
<dbReference type="EMBL" id="AY692643">
    <property type="protein sequence ID" value="AAT92662.1"/>
    <property type="molecule type" value="Genomic_DNA"/>
</dbReference>
<dbReference type="EMBL" id="BK006942">
    <property type="protein sequence ID" value="DAA08463.1"/>
    <property type="molecule type" value="Genomic_DNA"/>
</dbReference>
<dbReference type="PIR" id="S49790">
    <property type="entry name" value="S49790"/>
</dbReference>
<dbReference type="RefSeq" id="NP_012176.1">
    <property type="nucleotide sequence ID" value="NM_001179438.1"/>
</dbReference>
<dbReference type="BioGRID" id="34902">
    <property type="interactions" value="683"/>
</dbReference>
<dbReference type="FunCoup" id="P40499">
    <property type="interactions" value="103"/>
</dbReference>
<dbReference type="IntAct" id="P40499">
    <property type="interactions" value="46"/>
</dbReference>
<dbReference type="STRING" id="4932.YIL090W"/>
<dbReference type="TCDB" id="8.A.169.1.1">
    <property type="family name" value="the fungal inheritance of cortical er protein 2 (ice2) family"/>
</dbReference>
<dbReference type="GlyGen" id="P40499">
    <property type="glycosylation" value="1 site"/>
</dbReference>
<dbReference type="PaxDb" id="4932-YIL090W"/>
<dbReference type="PeptideAtlas" id="P40499"/>
<dbReference type="EnsemblFungi" id="YIL090W_mRNA">
    <property type="protein sequence ID" value="YIL090W"/>
    <property type="gene ID" value="YIL090W"/>
</dbReference>
<dbReference type="GeneID" id="854718"/>
<dbReference type="KEGG" id="sce:YIL090W"/>
<dbReference type="AGR" id="SGD:S000001352"/>
<dbReference type="SGD" id="S000001352">
    <property type="gene designation" value="ICE2"/>
</dbReference>
<dbReference type="VEuPathDB" id="FungiDB:YIL090W"/>
<dbReference type="eggNOG" id="ENOG502QRTT">
    <property type="taxonomic scope" value="Eukaryota"/>
</dbReference>
<dbReference type="HOGENOM" id="CLU_027878_2_0_1"/>
<dbReference type="InParanoid" id="P40499"/>
<dbReference type="OMA" id="CIYEISP"/>
<dbReference type="OrthoDB" id="5577218at2759"/>
<dbReference type="BioCyc" id="YEAST:G3O-31350-MONOMER"/>
<dbReference type="BioGRID-ORCS" id="854718">
    <property type="hits" value="10 hits in 10 CRISPR screens"/>
</dbReference>
<dbReference type="PRO" id="PR:P40499"/>
<dbReference type="Proteomes" id="UP000002311">
    <property type="component" value="Chromosome IX"/>
</dbReference>
<dbReference type="RNAct" id="P40499">
    <property type="molecule type" value="protein"/>
</dbReference>
<dbReference type="GO" id="GO:0032541">
    <property type="term" value="C:cortical endoplasmic reticulum"/>
    <property type="evidence" value="ECO:0000314"/>
    <property type="project" value="SGD"/>
</dbReference>
<dbReference type="GO" id="GO:0005783">
    <property type="term" value="C:endoplasmic reticulum"/>
    <property type="evidence" value="ECO:0007005"/>
    <property type="project" value="SGD"/>
</dbReference>
<dbReference type="GO" id="GO:0005789">
    <property type="term" value="C:endoplasmic reticulum membrane"/>
    <property type="evidence" value="ECO:0000314"/>
    <property type="project" value="SGD"/>
</dbReference>
<dbReference type="GO" id="GO:0097038">
    <property type="term" value="C:perinuclear endoplasmic reticulum"/>
    <property type="evidence" value="ECO:0000314"/>
    <property type="project" value="SGD"/>
</dbReference>
<dbReference type="GO" id="GO:0004865">
    <property type="term" value="F:protein serine/threonine phosphatase inhibitor activity"/>
    <property type="evidence" value="ECO:0000315"/>
    <property type="project" value="SGD"/>
</dbReference>
<dbReference type="GO" id="GO:0048309">
    <property type="term" value="P:endoplasmic reticulum inheritance"/>
    <property type="evidence" value="ECO:0000315"/>
    <property type="project" value="SGD"/>
</dbReference>
<dbReference type="GO" id="GO:0160031">
    <property type="term" value="P:endoplasmic reticulum membrane biogenesis"/>
    <property type="evidence" value="ECO:0000315"/>
    <property type="project" value="SGD"/>
</dbReference>
<dbReference type="GO" id="GO:0006882">
    <property type="term" value="P:intracellular zinc ion homeostasis"/>
    <property type="evidence" value="ECO:0000315"/>
    <property type="project" value="SGD"/>
</dbReference>
<dbReference type="GO" id="GO:0031204">
    <property type="term" value="P:post-translational protein targeting to membrane, translocation"/>
    <property type="evidence" value="ECO:0000315"/>
    <property type="project" value="SGD"/>
</dbReference>
<dbReference type="GO" id="GO:0036228">
    <property type="term" value="P:protein localization to nuclear inner membrane"/>
    <property type="evidence" value="ECO:0000315"/>
    <property type="project" value="SGD"/>
</dbReference>
<dbReference type="GO" id="GO:0000921">
    <property type="term" value="P:septin ring assembly"/>
    <property type="evidence" value="ECO:0000315"/>
    <property type="project" value="SGD"/>
</dbReference>
<dbReference type="InterPro" id="IPR013635">
    <property type="entry name" value="Ice2"/>
</dbReference>
<dbReference type="PANTHER" id="PTHR31726">
    <property type="entry name" value="PROTEIN ICE2"/>
    <property type="match status" value="1"/>
</dbReference>
<dbReference type="PANTHER" id="PTHR31726:SF2">
    <property type="entry name" value="PROTEIN ICE2"/>
    <property type="match status" value="1"/>
</dbReference>
<dbReference type="Pfam" id="PF08426">
    <property type="entry name" value="ICE2"/>
    <property type="match status" value="1"/>
</dbReference>
<reference key="1">
    <citation type="journal article" date="1997" name="Nature">
        <title>The nucleotide sequence of Saccharomyces cerevisiae chromosome IX.</title>
        <authorList>
            <person name="Churcher C.M."/>
            <person name="Bowman S."/>
            <person name="Badcock K."/>
            <person name="Bankier A.T."/>
            <person name="Brown D."/>
            <person name="Chillingworth T."/>
            <person name="Connor R."/>
            <person name="Devlin K."/>
            <person name="Gentles S."/>
            <person name="Hamlin N."/>
            <person name="Harris D.E."/>
            <person name="Horsnell T."/>
            <person name="Hunt S."/>
            <person name="Jagels K."/>
            <person name="Jones M."/>
            <person name="Lye G."/>
            <person name="Moule S."/>
            <person name="Odell C."/>
            <person name="Pearson D."/>
            <person name="Rajandream M.A."/>
            <person name="Rice P."/>
            <person name="Rowley N."/>
            <person name="Skelton J."/>
            <person name="Smith V."/>
            <person name="Walsh S.V."/>
            <person name="Whitehead S."/>
            <person name="Barrell B.G."/>
        </authorList>
    </citation>
    <scope>NUCLEOTIDE SEQUENCE [LARGE SCALE GENOMIC DNA]</scope>
    <source>
        <strain>ATCC 204508 / S288c</strain>
    </source>
</reference>
<reference key="2">
    <citation type="journal article" date="2014" name="G3 (Bethesda)">
        <title>The reference genome sequence of Saccharomyces cerevisiae: Then and now.</title>
        <authorList>
            <person name="Engel S.R."/>
            <person name="Dietrich F.S."/>
            <person name="Fisk D.G."/>
            <person name="Binkley G."/>
            <person name="Balakrishnan R."/>
            <person name="Costanzo M.C."/>
            <person name="Dwight S.S."/>
            <person name="Hitz B.C."/>
            <person name="Karra K."/>
            <person name="Nash R.S."/>
            <person name="Weng S."/>
            <person name="Wong E.D."/>
            <person name="Lloyd P."/>
            <person name="Skrzypek M.S."/>
            <person name="Miyasato S.R."/>
            <person name="Simison M."/>
            <person name="Cherry J.M."/>
        </authorList>
    </citation>
    <scope>GENOME REANNOTATION</scope>
    <source>
        <strain>ATCC 204508 / S288c</strain>
    </source>
</reference>
<reference key="3">
    <citation type="journal article" date="2007" name="Genome Res.">
        <title>Approaching a complete repository of sequence-verified protein-encoding clones for Saccharomyces cerevisiae.</title>
        <authorList>
            <person name="Hu Y."/>
            <person name="Rolfs A."/>
            <person name="Bhullar B."/>
            <person name="Murthy T.V.S."/>
            <person name="Zhu C."/>
            <person name="Berger M.F."/>
            <person name="Camargo A.A."/>
            <person name="Kelley F."/>
            <person name="McCarron S."/>
            <person name="Jepson D."/>
            <person name="Richardson A."/>
            <person name="Raphael J."/>
            <person name="Moreira D."/>
            <person name="Taycher E."/>
            <person name="Zuo D."/>
            <person name="Mohr S."/>
            <person name="Kane M.F."/>
            <person name="Williamson J."/>
            <person name="Simpson A.J.G."/>
            <person name="Bulyk M.L."/>
            <person name="Harlow E."/>
            <person name="Marsischky G."/>
            <person name="Kolodner R.D."/>
            <person name="LaBaer J."/>
        </authorList>
    </citation>
    <scope>NUCLEOTIDE SEQUENCE [GENOMIC DNA]</scope>
    <source>
        <strain>ATCC 204508 / S288c</strain>
    </source>
</reference>
<reference key="4">
    <citation type="journal article" date="2003" name="Nature">
        <title>Global analysis of protein localization in budding yeast.</title>
        <authorList>
            <person name="Huh W.-K."/>
            <person name="Falvo J.V."/>
            <person name="Gerke L.C."/>
            <person name="Carroll A.S."/>
            <person name="Howson R.W."/>
            <person name="Weissman J.S."/>
            <person name="O'Shea E.K."/>
        </authorList>
    </citation>
    <scope>SUBCELLULAR LOCATION [LARGE SCALE ANALYSIS]</scope>
</reference>
<reference key="5">
    <citation type="journal article" date="2003" name="Nature">
        <title>Global analysis of protein expression in yeast.</title>
        <authorList>
            <person name="Ghaemmaghami S."/>
            <person name="Huh W.-K."/>
            <person name="Bower K."/>
            <person name="Howson R.W."/>
            <person name="Belle A."/>
            <person name="Dephoure N."/>
            <person name="O'Shea E.K."/>
            <person name="Weissman J.S."/>
        </authorList>
    </citation>
    <scope>LEVEL OF PROTEIN EXPRESSION [LARGE SCALE ANALYSIS]</scope>
</reference>
<reference key="6">
    <citation type="journal article" date="2006" name="Proc. Natl. Acad. Sci. U.S.A.">
        <title>A global topology map of the Saccharomyces cerevisiae membrane proteome.</title>
        <authorList>
            <person name="Kim H."/>
            <person name="Melen K."/>
            <person name="Oesterberg M."/>
            <person name="von Heijne G."/>
        </authorList>
    </citation>
    <scope>TOPOLOGY [LARGE SCALE ANALYSIS]</scope>
    <source>
        <strain>ATCC 208353 / W303-1A</strain>
    </source>
</reference>
<feature type="chain" id="PRO_0000202975" description="Protein ICE2">
    <location>
        <begin position="1"/>
        <end position="491"/>
    </location>
</feature>
<feature type="topological domain" description="Cytoplasmic" evidence="1">
    <location>
        <begin position="1"/>
        <end position="13"/>
    </location>
</feature>
<feature type="transmembrane region" description="Helical" evidence="1">
    <location>
        <begin position="14"/>
        <end position="34"/>
    </location>
</feature>
<feature type="topological domain" description="Lumenal" evidence="1">
    <location>
        <begin position="35"/>
        <end position="40"/>
    </location>
</feature>
<feature type="transmembrane region" description="Helical" evidence="1">
    <location>
        <begin position="41"/>
        <end position="61"/>
    </location>
</feature>
<feature type="topological domain" description="Cytoplasmic" evidence="1">
    <location>
        <begin position="62"/>
        <end position="74"/>
    </location>
</feature>
<feature type="transmembrane region" description="Helical" evidence="1">
    <location>
        <begin position="75"/>
        <end position="95"/>
    </location>
</feature>
<feature type="topological domain" description="Lumenal" evidence="1">
    <location>
        <begin position="96"/>
        <end position="149"/>
    </location>
</feature>
<feature type="transmembrane region" description="Helical" evidence="1">
    <location>
        <begin position="150"/>
        <end position="170"/>
    </location>
</feature>
<feature type="topological domain" description="Cytoplasmic" evidence="1">
    <location>
        <begin position="171"/>
        <end position="184"/>
    </location>
</feature>
<feature type="transmembrane region" description="Helical" evidence="1">
    <location>
        <begin position="185"/>
        <end position="205"/>
    </location>
</feature>
<feature type="topological domain" description="Lumenal" evidence="1">
    <location>
        <begin position="206"/>
        <end position="218"/>
    </location>
</feature>
<feature type="transmembrane region" description="Helical" evidence="1">
    <location>
        <begin position="219"/>
        <end position="239"/>
    </location>
</feature>
<feature type="topological domain" description="Cytoplasmic" evidence="1">
    <location>
        <begin position="240"/>
        <end position="294"/>
    </location>
</feature>
<feature type="transmembrane region" description="Helical" evidence="1">
    <location>
        <begin position="295"/>
        <end position="315"/>
    </location>
</feature>
<feature type="topological domain" description="Lumenal" evidence="1">
    <location>
        <begin position="316"/>
        <end position="373"/>
    </location>
</feature>
<feature type="transmembrane region" description="Helical" evidence="1">
    <location>
        <begin position="374"/>
        <end position="394"/>
    </location>
</feature>
<feature type="topological domain" description="Cytoplasmic" evidence="1">
    <location>
        <begin position="395"/>
        <end position="413"/>
    </location>
</feature>
<feature type="transmembrane region" description="Helical" evidence="1">
    <location>
        <begin position="414"/>
        <end position="434"/>
    </location>
</feature>
<feature type="topological domain" description="Lumenal" evidence="1">
    <location>
        <begin position="435"/>
        <end position="461"/>
    </location>
</feature>
<feature type="transmembrane region" description="Helical" evidence="1">
    <location>
        <begin position="462"/>
        <end position="482"/>
    </location>
</feature>
<feature type="topological domain" description="Cytoplasmic" evidence="1">
    <location>
        <begin position="483"/>
        <end position="491"/>
    </location>
</feature>
<feature type="sequence conflict" description="In Ref. 3; AAT92662." evidence="4" ref="3">
    <original>S</original>
    <variation>P</variation>
    <location>
        <position position="93"/>
    </location>
</feature>
<gene>
    <name type="primary">ICE2</name>
    <name type="ordered locus">YIL090W</name>
</gene>